<feature type="chain" id="PRO_1000048808" description="tRNA modification GTPase MnmE">
    <location>
        <begin position="1"/>
        <end position="455"/>
    </location>
</feature>
<feature type="domain" description="TrmE-type G">
    <location>
        <begin position="220"/>
        <end position="377"/>
    </location>
</feature>
<feature type="binding site" evidence="1">
    <location>
        <position position="22"/>
    </location>
    <ligand>
        <name>(6S)-5-formyl-5,6,7,8-tetrahydrofolate</name>
        <dbReference type="ChEBI" id="CHEBI:57457"/>
    </ligand>
</feature>
<feature type="binding site" evidence="1">
    <location>
        <position position="85"/>
    </location>
    <ligand>
        <name>(6S)-5-formyl-5,6,7,8-tetrahydrofolate</name>
        <dbReference type="ChEBI" id="CHEBI:57457"/>
    </ligand>
</feature>
<feature type="binding site" evidence="1">
    <location>
        <position position="124"/>
    </location>
    <ligand>
        <name>(6S)-5-formyl-5,6,7,8-tetrahydrofolate</name>
        <dbReference type="ChEBI" id="CHEBI:57457"/>
    </ligand>
</feature>
<feature type="binding site" evidence="1">
    <location>
        <begin position="230"/>
        <end position="235"/>
    </location>
    <ligand>
        <name>GTP</name>
        <dbReference type="ChEBI" id="CHEBI:37565"/>
    </ligand>
</feature>
<feature type="binding site" evidence="1">
    <location>
        <position position="230"/>
    </location>
    <ligand>
        <name>K(+)</name>
        <dbReference type="ChEBI" id="CHEBI:29103"/>
    </ligand>
</feature>
<feature type="binding site" evidence="1">
    <location>
        <position position="234"/>
    </location>
    <ligand>
        <name>Mg(2+)</name>
        <dbReference type="ChEBI" id="CHEBI:18420"/>
    </ligand>
</feature>
<feature type="binding site" evidence="1">
    <location>
        <begin position="249"/>
        <end position="255"/>
    </location>
    <ligand>
        <name>GTP</name>
        <dbReference type="ChEBI" id="CHEBI:37565"/>
    </ligand>
</feature>
<feature type="binding site" evidence="1">
    <location>
        <position position="249"/>
    </location>
    <ligand>
        <name>K(+)</name>
        <dbReference type="ChEBI" id="CHEBI:29103"/>
    </ligand>
</feature>
<feature type="binding site" evidence="1">
    <location>
        <position position="251"/>
    </location>
    <ligand>
        <name>K(+)</name>
        <dbReference type="ChEBI" id="CHEBI:29103"/>
    </ligand>
</feature>
<feature type="binding site" evidence="1">
    <location>
        <position position="254"/>
    </location>
    <ligand>
        <name>K(+)</name>
        <dbReference type="ChEBI" id="CHEBI:29103"/>
    </ligand>
</feature>
<feature type="binding site" evidence="1">
    <location>
        <position position="255"/>
    </location>
    <ligand>
        <name>Mg(2+)</name>
        <dbReference type="ChEBI" id="CHEBI:18420"/>
    </ligand>
</feature>
<feature type="binding site" evidence="1">
    <location>
        <begin position="274"/>
        <end position="277"/>
    </location>
    <ligand>
        <name>GTP</name>
        <dbReference type="ChEBI" id="CHEBI:37565"/>
    </ligand>
</feature>
<feature type="binding site" evidence="1">
    <location>
        <position position="455"/>
    </location>
    <ligand>
        <name>(6S)-5-formyl-5,6,7,8-tetrahydrofolate</name>
        <dbReference type="ChEBI" id="CHEBI:57457"/>
    </ligand>
</feature>
<organism>
    <name type="scientific">Caldicellulosiruptor saccharolyticus (strain ATCC 43494 / DSM 8903 / Tp8T 6331)</name>
    <dbReference type="NCBI Taxonomy" id="351627"/>
    <lineage>
        <taxon>Bacteria</taxon>
        <taxon>Bacillati</taxon>
        <taxon>Bacillota</taxon>
        <taxon>Bacillota incertae sedis</taxon>
        <taxon>Caldicellulosiruptorales</taxon>
        <taxon>Caldicellulosiruptoraceae</taxon>
        <taxon>Caldicellulosiruptor</taxon>
    </lineage>
</organism>
<evidence type="ECO:0000255" key="1">
    <source>
        <dbReference type="HAMAP-Rule" id="MF_00379"/>
    </source>
</evidence>
<sequence>MEFDTIAAISTPIGTGGIGIIRISGQNSIEVAGKIIKSKRFNSIYDIPVRYAALVEVYDNDEFIDQAILIKFKAPHSYTGEDVVEIQSHGGMVVLRRILEVVIKNGARHAMPGEFTKRAFLNGRLDLSQAEAIIDIINSKTELLQKNAAKQLKGVLSKKIDEIAEILLNLISSIEASIDFSEHEVDEISPQEIEKSIDTALEMIYRLLKTYETGRAIKSGIYTVIVGRPNVGKSSLLNRLLKEERSIVTDIPGTTRDVIEEVLDIEGIPIILVDTAGVRQTEDIVERIGVERTLKSVERADLVIFMIESDGITKEDIEIFSSIKNKKYIILVNKTDKGINISQDEIKKLFGKEGIFISIAKDENLELVEKAIKEAILEQNIEGFDEVLITNLRHKELLLKAKGFLTSAKQNLYSFPLDILSIDLKNALDSIYQITGKNVTEDMVDRIFSMFCIGK</sequence>
<reference key="1">
    <citation type="submission" date="2007-04" db="EMBL/GenBank/DDBJ databases">
        <title>Genome sequence of the thermophilic hydrogen-producing bacterium Caldicellulosiruptor saccharolyticus DSM 8903.</title>
        <authorList>
            <person name="Copeland A."/>
            <person name="Lucas S."/>
            <person name="Lapidus A."/>
            <person name="Barry K."/>
            <person name="Detter J.C."/>
            <person name="Glavina del Rio T."/>
            <person name="Hammon N."/>
            <person name="Israni S."/>
            <person name="Dalin E."/>
            <person name="Tice H."/>
            <person name="Pitluck S."/>
            <person name="Kiss H."/>
            <person name="Brettin T."/>
            <person name="Bruce D."/>
            <person name="Han C."/>
            <person name="Schmutz J."/>
            <person name="Larimer F."/>
            <person name="Land M."/>
            <person name="Hauser L."/>
            <person name="Kyrpides N."/>
            <person name="Lykidis A."/>
            <person name="van de Werken H.J.G."/>
            <person name="Verhaart M.R.A."/>
            <person name="VanFossen A.L."/>
            <person name="Lewis D.L."/>
            <person name="Nichols J.D."/>
            <person name="Goorissen H.P."/>
            <person name="van Niel E.W.J."/>
            <person name="Stams F.J.M."/>
            <person name="Willquist K.U."/>
            <person name="Ward D.E."/>
            <person name="van der Oost J."/>
            <person name="Kelly R.M."/>
            <person name="Kengen S.M.W."/>
            <person name="Richardson P."/>
        </authorList>
    </citation>
    <scope>NUCLEOTIDE SEQUENCE [LARGE SCALE GENOMIC DNA]</scope>
    <source>
        <strain>ATCC 43494 / DSM 8903 / Tp8T 6331</strain>
    </source>
</reference>
<proteinExistence type="inferred from homology"/>
<dbReference type="EC" id="3.6.-.-" evidence="1"/>
<dbReference type="EMBL" id="CP000679">
    <property type="protein sequence ID" value="ABP68336.1"/>
    <property type="molecule type" value="Genomic_DNA"/>
</dbReference>
<dbReference type="RefSeq" id="WP_011918253.1">
    <property type="nucleotide sequence ID" value="NC_009437.1"/>
</dbReference>
<dbReference type="SMR" id="A4XN51"/>
<dbReference type="STRING" id="351627.Csac_2771"/>
<dbReference type="KEGG" id="csc:Csac_2771"/>
<dbReference type="eggNOG" id="COG0486">
    <property type="taxonomic scope" value="Bacteria"/>
</dbReference>
<dbReference type="HOGENOM" id="CLU_019624_4_1_9"/>
<dbReference type="OrthoDB" id="9805918at2"/>
<dbReference type="Proteomes" id="UP000000256">
    <property type="component" value="Chromosome"/>
</dbReference>
<dbReference type="GO" id="GO:0005829">
    <property type="term" value="C:cytosol"/>
    <property type="evidence" value="ECO:0007669"/>
    <property type="project" value="TreeGrafter"/>
</dbReference>
<dbReference type="GO" id="GO:0005525">
    <property type="term" value="F:GTP binding"/>
    <property type="evidence" value="ECO:0007669"/>
    <property type="project" value="UniProtKB-UniRule"/>
</dbReference>
<dbReference type="GO" id="GO:0003924">
    <property type="term" value="F:GTPase activity"/>
    <property type="evidence" value="ECO:0007669"/>
    <property type="project" value="UniProtKB-UniRule"/>
</dbReference>
<dbReference type="GO" id="GO:0046872">
    <property type="term" value="F:metal ion binding"/>
    <property type="evidence" value="ECO:0007669"/>
    <property type="project" value="UniProtKB-KW"/>
</dbReference>
<dbReference type="GO" id="GO:0030488">
    <property type="term" value="P:tRNA methylation"/>
    <property type="evidence" value="ECO:0007669"/>
    <property type="project" value="TreeGrafter"/>
</dbReference>
<dbReference type="GO" id="GO:0002098">
    <property type="term" value="P:tRNA wobble uridine modification"/>
    <property type="evidence" value="ECO:0007669"/>
    <property type="project" value="TreeGrafter"/>
</dbReference>
<dbReference type="CDD" id="cd04164">
    <property type="entry name" value="trmE"/>
    <property type="match status" value="1"/>
</dbReference>
<dbReference type="CDD" id="cd14858">
    <property type="entry name" value="TrmE_N"/>
    <property type="match status" value="1"/>
</dbReference>
<dbReference type="FunFam" id="3.30.1360.120:FF:000003">
    <property type="entry name" value="tRNA modification GTPase MnmE"/>
    <property type="match status" value="1"/>
</dbReference>
<dbReference type="FunFam" id="3.40.50.300:FF:000494">
    <property type="entry name" value="tRNA modification GTPase MnmE"/>
    <property type="match status" value="1"/>
</dbReference>
<dbReference type="Gene3D" id="3.40.50.300">
    <property type="entry name" value="P-loop containing nucleotide triphosphate hydrolases"/>
    <property type="match status" value="1"/>
</dbReference>
<dbReference type="Gene3D" id="3.30.1360.120">
    <property type="entry name" value="Probable tRNA modification gtpase trme, domain 1"/>
    <property type="match status" value="1"/>
</dbReference>
<dbReference type="Gene3D" id="1.20.120.430">
    <property type="entry name" value="tRNA modification GTPase MnmE domain 2"/>
    <property type="match status" value="1"/>
</dbReference>
<dbReference type="HAMAP" id="MF_00379">
    <property type="entry name" value="GTPase_MnmE"/>
    <property type="match status" value="1"/>
</dbReference>
<dbReference type="InterPro" id="IPR031168">
    <property type="entry name" value="G_TrmE"/>
</dbReference>
<dbReference type="InterPro" id="IPR006073">
    <property type="entry name" value="GTP-bd"/>
</dbReference>
<dbReference type="InterPro" id="IPR018948">
    <property type="entry name" value="GTP-bd_TrmE_N"/>
</dbReference>
<dbReference type="InterPro" id="IPR004520">
    <property type="entry name" value="GTPase_MnmE"/>
</dbReference>
<dbReference type="InterPro" id="IPR027368">
    <property type="entry name" value="MnmE_dom2"/>
</dbReference>
<dbReference type="InterPro" id="IPR025867">
    <property type="entry name" value="MnmE_helical"/>
</dbReference>
<dbReference type="InterPro" id="IPR027417">
    <property type="entry name" value="P-loop_NTPase"/>
</dbReference>
<dbReference type="InterPro" id="IPR005225">
    <property type="entry name" value="Small_GTP-bd"/>
</dbReference>
<dbReference type="InterPro" id="IPR027266">
    <property type="entry name" value="TrmE/GcvT_dom1"/>
</dbReference>
<dbReference type="NCBIfam" id="TIGR00450">
    <property type="entry name" value="mnmE_trmE_thdF"/>
    <property type="match status" value="1"/>
</dbReference>
<dbReference type="NCBIfam" id="NF003661">
    <property type="entry name" value="PRK05291.1-3"/>
    <property type="match status" value="1"/>
</dbReference>
<dbReference type="NCBIfam" id="TIGR00231">
    <property type="entry name" value="small_GTP"/>
    <property type="match status" value="1"/>
</dbReference>
<dbReference type="PANTHER" id="PTHR42714">
    <property type="entry name" value="TRNA MODIFICATION GTPASE GTPBP3"/>
    <property type="match status" value="1"/>
</dbReference>
<dbReference type="PANTHER" id="PTHR42714:SF2">
    <property type="entry name" value="TRNA MODIFICATION GTPASE GTPBP3, MITOCHONDRIAL"/>
    <property type="match status" value="1"/>
</dbReference>
<dbReference type="Pfam" id="PF01926">
    <property type="entry name" value="MMR_HSR1"/>
    <property type="match status" value="1"/>
</dbReference>
<dbReference type="Pfam" id="PF12631">
    <property type="entry name" value="MnmE_helical"/>
    <property type="match status" value="1"/>
</dbReference>
<dbReference type="Pfam" id="PF10396">
    <property type="entry name" value="TrmE_N"/>
    <property type="match status" value="1"/>
</dbReference>
<dbReference type="PRINTS" id="PR00326">
    <property type="entry name" value="GTP1OBG"/>
</dbReference>
<dbReference type="SUPFAM" id="SSF52540">
    <property type="entry name" value="P-loop containing nucleoside triphosphate hydrolases"/>
    <property type="match status" value="1"/>
</dbReference>
<dbReference type="PROSITE" id="PS51709">
    <property type="entry name" value="G_TRME"/>
    <property type="match status" value="1"/>
</dbReference>
<name>MNME_CALS8</name>
<comment type="function">
    <text evidence="1">Exhibits a very high intrinsic GTPase hydrolysis rate. Involved in the addition of a carboxymethylaminomethyl (cmnm) group at the wobble position (U34) of certain tRNAs, forming tRNA-cmnm(5)s(2)U34.</text>
</comment>
<comment type="cofactor">
    <cofactor evidence="1">
        <name>K(+)</name>
        <dbReference type="ChEBI" id="CHEBI:29103"/>
    </cofactor>
    <text evidence="1">Binds 1 potassium ion per subunit.</text>
</comment>
<comment type="subunit">
    <text evidence="1">Homodimer. Heterotetramer of two MnmE and two MnmG subunits.</text>
</comment>
<comment type="subcellular location">
    <subcellularLocation>
        <location evidence="1">Cytoplasm</location>
    </subcellularLocation>
</comment>
<comment type="similarity">
    <text evidence="1">Belongs to the TRAFAC class TrmE-Era-EngA-EngB-Septin-like GTPase superfamily. TrmE GTPase family.</text>
</comment>
<protein>
    <recommendedName>
        <fullName evidence="1">tRNA modification GTPase MnmE</fullName>
        <ecNumber evidence="1">3.6.-.-</ecNumber>
    </recommendedName>
</protein>
<accession>A4XN51</accession>
<keyword id="KW-0963">Cytoplasm</keyword>
<keyword id="KW-0342">GTP-binding</keyword>
<keyword id="KW-0378">Hydrolase</keyword>
<keyword id="KW-0460">Magnesium</keyword>
<keyword id="KW-0479">Metal-binding</keyword>
<keyword id="KW-0547">Nucleotide-binding</keyword>
<keyword id="KW-0630">Potassium</keyword>
<keyword id="KW-0819">tRNA processing</keyword>
<gene>
    <name evidence="1" type="primary">mnmE</name>
    <name evidence="1" type="synonym">trmE</name>
    <name type="ordered locus">Csac_2771</name>
</gene>